<name>ANR61_RAT</name>
<sequence length="418" mass="46320">MGNITKRGSRDFAADSAVLLEGSLATALHSRLYEAIIKEDCDTIRTLLRNHPVNQPLTLLASSTGYRFLSQQTQPIFPIHLAAEYRKPQSLLCLLQHGADPEVRDAQGLTTLHLMLLNWPVTSTTWTKPSTRIQKILTDIQNNAVLCLRILCDHGAQVNARVDNSNKHSPLHLAITYGTYPVLSFLAQNGAQVNAINESSMTPLHMAADILNKNMIETLIACGANVNCAISSTGNTALKLAVCTASSKAGRLLAAGVGCIRLLLNHGAQVNAQDHEGQTALHEACFGGREVIINLLLEFEANVNILTRNGESPIYMYLQRSSNIRDVTLLARLLYRTYPLRLSNKQGALPAGIMLPEFHLLRETLIKLSKKPLTLEAICKRNIRNVYGEKYKFQLKKLLPAKLWNSIYGIYDFTYLLK</sequence>
<accession>Q641X1</accession>
<keyword id="KW-0040">ANK repeat</keyword>
<keyword id="KW-1185">Reference proteome</keyword>
<keyword id="KW-0677">Repeat</keyword>
<dbReference type="EMBL" id="BC082099">
    <property type="protein sequence ID" value="AAH82099.1"/>
    <property type="molecule type" value="mRNA"/>
</dbReference>
<dbReference type="RefSeq" id="NP_001037762.1">
    <property type="nucleotide sequence ID" value="NM_001044297.1"/>
</dbReference>
<dbReference type="SMR" id="Q641X1"/>
<dbReference type="STRING" id="10116.ENSRNOP00000001382"/>
<dbReference type="PhosphoSitePlus" id="Q641X1"/>
<dbReference type="PaxDb" id="10116-ENSRNOP00000001382"/>
<dbReference type="Ensembl" id="ENSRNOT00000001382.5">
    <property type="protein sequence ID" value="ENSRNOP00000001382.2"/>
    <property type="gene ID" value="ENSRNOG00000001048.8"/>
</dbReference>
<dbReference type="GeneID" id="689907"/>
<dbReference type="KEGG" id="rno:689907"/>
<dbReference type="AGR" id="RGD:1586393"/>
<dbReference type="CTD" id="100310846"/>
<dbReference type="RGD" id="1586393">
    <property type="gene designation" value="Ankrd61"/>
</dbReference>
<dbReference type="eggNOG" id="KOG4177">
    <property type="taxonomic scope" value="Eukaryota"/>
</dbReference>
<dbReference type="GeneTree" id="ENSGT00840000130004"/>
<dbReference type="HOGENOM" id="CLU_054056_0_0_1"/>
<dbReference type="InParanoid" id="Q641X1"/>
<dbReference type="OMA" id="AINESSM"/>
<dbReference type="OrthoDB" id="194358at2759"/>
<dbReference type="PhylomeDB" id="Q641X1"/>
<dbReference type="TreeFam" id="TF352214"/>
<dbReference type="PRO" id="PR:Q641X1"/>
<dbReference type="Proteomes" id="UP000002494">
    <property type="component" value="Chromosome 12"/>
</dbReference>
<dbReference type="Bgee" id="ENSRNOG00000001048">
    <property type="expression patterns" value="Expressed in testis and 19 other cell types or tissues"/>
</dbReference>
<dbReference type="ExpressionAtlas" id="Q641X1">
    <property type="expression patterns" value="baseline and differential"/>
</dbReference>
<dbReference type="GO" id="GO:0005654">
    <property type="term" value="C:nucleoplasm"/>
    <property type="evidence" value="ECO:0007669"/>
    <property type="project" value="Ensembl"/>
</dbReference>
<dbReference type="Gene3D" id="1.25.40.20">
    <property type="entry name" value="Ankyrin repeat-containing domain"/>
    <property type="match status" value="3"/>
</dbReference>
<dbReference type="InterPro" id="IPR002110">
    <property type="entry name" value="Ankyrin_rpt"/>
</dbReference>
<dbReference type="InterPro" id="IPR036770">
    <property type="entry name" value="Ankyrin_rpt-contain_sf"/>
</dbReference>
<dbReference type="PANTHER" id="PTHR24197">
    <property type="entry name" value="ANKYRIN REPEAT DOMAIN-CONTAINING PROTEIN 61"/>
    <property type="match status" value="1"/>
</dbReference>
<dbReference type="PANTHER" id="PTHR24197:SF48">
    <property type="entry name" value="ANKYRIN REPEAT DOMAIN-CONTAINING PROTEIN 61"/>
    <property type="match status" value="1"/>
</dbReference>
<dbReference type="Pfam" id="PF00023">
    <property type="entry name" value="Ank"/>
    <property type="match status" value="1"/>
</dbReference>
<dbReference type="Pfam" id="PF12796">
    <property type="entry name" value="Ank_2"/>
    <property type="match status" value="1"/>
</dbReference>
<dbReference type="Pfam" id="PF13637">
    <property type="entry name" value="Ank_4"/>
    <property type="match status" value="1"/>
</dbReference>
<dbReference type="SMART" id="SM00248">
    <property type="entry name" value="ANK"/>
    <property type="match status" value="7"/>
</dbReference>
<dbReference type="SUPFAM" id="SSF48403">
    <property type="entry name" value="Ankyrin repeat"/>
    <property type="match status" value="1"/>
</dbReference>
<dbReference type="PROSITE" id="PS50297">
    <property type="entry name" value="ANK_REP_REGION"/>
    <property type="match status" value="1"/>
</dbReference>
<dbReference type="PROSITE" id="PS50088">
    <property type="entry name" value="ANK_REPEAT"/>
    <property type="match status" value="5"/>
</dbReference>
<proteinExistence type="evidence at transcript level"/>
<feature type="chain" id="PRO_0000328764" description="Ankyrin repeat domain-containing protein 61">
    <location>
        <begin position="1"/>
        <end position="418"/>
    </location>
</feature>
<feature type="repeat" description="ANK 1">
    <location>
        <begin position="27"/>
        <end position="57"/>
    </location>
</feature>
<feature type="repeat" description="ANK 2">
    <location>
        <begin position="74"/>
        <end position="103"/>
    </location>
</feature>
<feature type="repeat" description="ANK 3">
    <location>
        <begin position="131"/>
        <end position="160"/>
    </location>
</feature>
<feature type="repeat" description="ANK 4">
    <location>
        <begin position="166"/>
        <end position="195"/>
    </location>
</feature>
<feature type="repeat" description="ANK 5">
    <location>
        <begin position="199"/>
        <end position="228"/>
    </location>
</feature>
<feature type="repeat" description="ANK 6">
    <location>
        <begin position="233"/>
        <end position="272"/>
    </location>
</feature>
<feature type="repeat" description="ANK 7">
    <location>
        <begin position="276"/>
        <end position="305"/>
    </location>
</feature>
<feature type="repeat" description="ANK 8">
    <location>
        <begin position="309"/>
        <end position="342"/>
    </location>
</feature>
<gene>
    <name type="primary">Ankrd61</name>
</gene>
<reference key="1">
    <citation type="journal article" date="2004" name="Genome Res.">
        <title>The status, quality, and expansion of the NIH full-length cDNA project: the Mammalian Gene Collection (MGC).</title>
        <authorList>
            <consortium name="The MGC Project Team"/>
        </authorList>
    </citation>
    <scope>NUCLEOTIDE SEQUENCE [LARGE SCALE MRNA]</scope>
    <source>
        <tissue>Testis</tissue>
    </source>
</reference>
<protein>
    <recommendedName>
        <fullName>Ankyrin repeat domain-containing protein 61</fullName>
    </recommendedName>
</protein>
<organism>
    <name type="scientific">Rattus norvegicus</name>
    <name type="common">Rat</name>
    <dbReference type="NCBI Taxonomy" id="10116"/>
    <lineage>
        <taxon>Eukaryota</taxon>
        <taxon>Metazoa</taxon>
        <taxon>Chordata</taxon>
        <taxon>Craniata</taxon>
        <taxon>Vertebrata</taxon>
        <taxon>Euteleostomi</taxon>
        <taxon>Mammalia</taxon>
        <taxon>Eutheria</taxon>
        <taxon>Euarchontoglires</taxon>
        <taxon>Glires</taxon>
        <taxon>Rodentia</taxon>
        <taxon>Myomorpha</taxon>
        <taxon>Muroidea</taxon>
        <taxon>Muridae</taxon>
        <taxon>Murinae</taxon>
        <taxon>Rattus</taxon>
    </lineage>
</organism>